<evidence type="ECO:0000255" key="1">
    <source>
        <dbReference type="HAMAP-Rule" id="MF_00300"/>
    </source>
</evidence>
<proteinExistence type="inferred from homology"/>
<accession>A5FS06</accession>
<name>AROC_DEHMB</name>
<dbReference type="EC" id="4.2.3.5" evidence="1"/>
<dbReference type="EMBL" id="CP000688">
    <property type="protein sequence ID" value="ABQ17024.1"/>
    <property type="molecule type" value="Genomic_DNA"/>
</dbReference>
<dbReference type="SMR" id="A5FS06"/>
<dbReference type="KEGG" id="deb:DehaBAV1_0439"/>
<dbReference type="PATRIC" id="fig|216389.18.peg.482"/>
<dbReference type="HOGENOM" id="CLU_034547_0_0_0"/>
<dbReference type="UniPathway" id="UPA00053">
    <property type="reaction ID" value="UER00090"/>
</dbReference>
<dbReference type="GO" id="GO:0005829">
    <property type="term" value="C:cytosol"/>
    <property type="evidence" value="ECO:0007669"/>
    <property type="project" value="TreeGrafter"/>
</dbReference>
<dbReference type="GO" id="GO:0004107">
    <property type="term" value="F:chorismate synthase activity"/>
    <property type="evidence" value="ECO:0007669"/>
    <property type="project" value="UniProtKB-UniRule"/>
</dbReference>
<dbReference type="GO" id="GO:0010181">
    <property type="term" value="F:FMN binding"/>
    <property type="evidence" value="ECO:0007669"/>
    <property type="project" value="TreeGrafter"/>
</dbReference>
<dbReference type="GO" id="GO:0008652">
    <property type="term" value="P:amino acid biosynthetic process"/>
    <property type="evidence" value="ECO:0007669"/>
    <property type="project" value="UniProtKB-KW"/>
</dbReference>
<dbReference type="GO" id="GO:0009073">
    <property type="term" value="P:aromatic amino acid family biosynthetic process"/>
    <property type="evidence" value="ECO:0007669"/>
    <property type="project" value="UniProtKB-KW"/>
</dbReference>
<dbReference type="GO" id="GO:0009423">
    <property type="term" value="P:chorismate biosynthetic process"/>
    <property type="evidence" value="ECO:0007669"/>
    <property type="project" value="UniProtKB-UniRule"/>
</dbReference>
<dbReference type="CDD" id="cd07304">
    <property type="entry name" value="Chorismate_synthase"/>
    <property type="match status" value="1"/>
</dbReference>
<dbReference type="FunFam" id="3.60.150.10:FF:000002">
    <property type="entry name" value="Chorismate synthase"/>
    <property type="match status" value="1"/>
</dbReference>
<dbReference type="Gene3D" id="3.60.150.10">
    <property type="entry name" value="Chorismate synthase AroC"/>
    <property type="match status" value="1"/>
</dbReference>
<dbReference type="HAMAP" id="MF_00300">
    <property type="entry name" value="Chorismate_synth"/>
    <property type="match status" value="1"/>
</dbReference>
<dbReference type="InterPro" id="IPR000453">
    <property type="entry name" value="Chorismate_synth"/>
</dbReference>
<dbReference type="InterPro" id="IPR035904">
    <property type="entry name" value="Chorismate_synth_AroC_sf"/>
</dbReference>
<dbReference type="InterPro" id="IPR020541">
    <property type="entry name" value="Chorismate_synthase_CS"/>
</dbReference>
<dbReference type="NCBIfam" id="TIGR00033">
    <property type="entry name" value="aroC"/>
    <property type="match status" value="1"/>
</dbReference>
<dbReference type="NCBIfam" id="NF003793">
    <property type="entry name" value="PRK05382.1"/>
    <property type="match status" value="1"/>
</dbReference>
<dbReference type="PANTHER" id="PTHR21085">
    <property type="entry name" value="CHORISMATE SYNTHASE"/>
    <property type="match status" value="1"/>
</dbReference>
<dbReference type="PANTHER" id="PTHR21085:SF0">
    <property type="entry name" value="CHORISMATE SYNTHASE"/>
    <property type="match status" value="1"/>
</dbReference>
<dbReference type="Pfam" id="PF01264">
    <property type="entry name" value="Chorismate_synt"/>
    <property type="match status" value="1"/>
</dbReference>
<dbReference type="PIRSF" id="PIRSF001456">
    <property type="entry name" value="Chorismate_synth"/>
    <property type="match status" value="1"/>
</dbReference>
<dbReference type="SUPFAM" id="SSF103263">
    <property type="entry name" value="Chorismate synthase, AroC"/>
    <property type="match status" value="1"/>
</dbReference>
<dbReference type="PROSITE" id="PS00787">
    <property type="entry name" value="CHORISMATE_SYNTHASE_1"/>
    <property type="match status" value="1"/>
</dbReference>
<dbReference type="PROSITE" id="PS00788">
    <property type="entry name" value="CHORISMATE_SYNTHASE_2"/>
    <property type="match status" value="1"/>
</dbReference>
<sequence>MSNSLGKLFQITSFGESHGDCVGVVIDGVPAGLAINVDEIQIEVDKRKSGAKAHTTPRREDDRIEIFSGIFNNFTTGAPICLVIWNKNIDSSEYERTRSKIRPGHADFTGFMKYGGFNDYRGGGRFSGRITAGHVMAGAIARKLISTIGIEVIGYTAELGGITAKLPKHKDIRQNISQSDVNCPDLAASKQMVALIQQAAEEGDSLGGVVECIGLNLPVGLGEPVFDTLEGELAKAIFAIPAVKGVEFGAGFGASRLRGSKNNDPFNIQSDQIRTTSNNCGGILGGISDGMPLHIRVAVKPTPSISLSQPTVNLDTMTNTSLEIRGRHDTCIVPRAVSVVEAMTCIVLADLALRAGIIPRVIKQ</sequence>
<comment type="function">
    <text evidence="1">Catalyzes the anti-1,4-elimination of the C-3 phosphate and the C-6 proR hydrogen from 5-enolpyruvylshikimate-3-phosphate (EPSP) to yield chorismate, which is the branch point compound that serves as the starting substrate for the three terminal pathways of aromatic amino acid biosynthesis. This reaction introduces a second double bond into the aromatic ring system.</text>
</comment>
<comment type="catalytic activity">
    <reaction evidence="1">
        <text>5-O-(1-carboxyvinyl)-3-phosphoshikimate = chorismate + phosphate</text>
        <dbReference type="Rhea" id="RHEA:21020"/>
        <dbReference type="ChEBI" id="CHEBI:29748"/>
        <dbReference type="ChEBI" id="CHEBI:43474"/>
        <dbReference type="ChEBI" id="CHEBI:57701"/>
        <dbReference type="EC" id="4.2.3.5"/>
    </reaction>
</comment>
<comment type="cofactor">
    <cofactor evidence="1">
        <name>FMNH2</name>
        <dbReference type="ChEBI" id="CHEBI:57618"/>
    </cofactor>
    <text evidence="1">Reduced FMN (FMNH(2)).</text>
</comment>
<comment type="pathway">
    <text evidence="1">Metabolic intermediate biosynthesis; chorismate biosynthesis; chorismate from D-erythrose 4-phosphate and phosphoenolpyruvate: step 7/7.</text>
</comment>
<comment type="subunit">
    <text evidence="1">Homotetramer.</text>
</comment>
<comment type="similarity">
    <text evidence="1">Belongs to the chorismate synthase family.</text>
</comment>
<organism>
    <name type="scientific">Dehalococcoides mccartyi (strain ATCC BAA-2100 / JCM 16839 / KCTC 5957 / BAV1)</name>
    <dbReference type="NCBI Taxonomy" id="216389"/>
    <lineage>
        <taxon>Bacteria</taxon>
        <taxon>Bacillati</taxon>
        <taxon>Chloroflexota</taxon>
        <taxon>Dehalococcoidia</taxon>
        <taxon>Dehalococcoidales</taxon>
        <taxon>Dehalococcoidaceae</taxon>
        <taxon>Dehalococcoides</taxon>
    </lineage>
</organism>
<protein>
    <recommendedName>
        <fullName evidence="1">Chorismate synthase</fullName>
        <shortName evidence="1">CS</shortName>
        <ecNumber evidence="1">4.2.3.5</ecNumber>
    </recommendedName>
    <alternativeName>
        <fullName evidence="1">5-enolpyruvylshikimate-3-phosphate phospholyase</fullName>
    </alternativeName>
</protein>
<gene>
    <name evidence="1" type="primary">aroC</name>
    <name type="ordered locus">DehaBAV1_0439</name>
</gene>
<feature type="chain" id="PRO_1000078991" description="Chorismate synthase">
    <location>
        <begin position="1"/>
        <end position="364"/>
    </location>
</feature>
<feature type="binding site" evidence="1">
    <location>
        <position position="47"/>
    </location>
    <ligand>
        <name>NADP(+)</name>
        <dbReference type="ChEBI" id="CHEBI:58349"/>
    </ligand>
</feature>
<feature type="binding site" evidence="1">
    <location>
        <begin position="125"/>
        <end position="127"/>
    </location>
    <ligand>
        <name>FMN</name>
        <dbReference type="ChEBI" id="CHEBI:58210"/>
    </ligand>
</feature>
<feature type="binding site" evidence="1">
    <location>
        <position position="285"/>
    </location>
    <ligand>
        <name>FMN</name>
        <dbReference type="ChEBI" id="CHEBI:58210"/>
    </ligand>
</feature>
<feature type="binding site" evidence="1">
    <location>
        <begin position="300"/>
        <end position="304"/>
    </location>
    <ligand>
        <name>FMN</name>
        <dbReference type="ChEBI" id="CHEBI:58210"/>
    </ligand>
</feature>
<feature type="binding site" evidence="1">
    <location>
        <position position="327"/>
    </location>
    <ligand>
        <name>FMN</name>
        <dbReference type="ChEBI" id="CHEBI:58210"/>
    </ligand>
</feature>
<reference key="1">
    <citation type="submission" date="2007-05" db="EMBL/GenBank/DDBJ databases">
        <title>Complete sequence of Dehalococcoides sp. BAV1.</title>
        <authorList>
            <consortium name="US DOE Joint Genome Institute"/>
            <person name="Copeland A."/>
            <person name="Lucas S."/>
            <person name="Lapidus A."/>
            <person name="Barry K."/>
            <person name="Detter J.C."/>
            <person name="Glavina del Rio T."/>
            <person name="Hammon N."/>
            <person name="Israni S."/>
            <person name="Pitluck S."/>
            <person name="Lowry S."/>
            <person name="Clum A."/>
            <person name="Schmutz J."/>
            <person name="Larimer F."/>
            <person name="Land M."/>
            <person name="Hauser L."/>
            <person name="Kyrpides N."/>
            <person name="Kim E."/>
            <person name="Ritalahti K.M."/>
            <person name="Loeffler F."/>
            <person name="Richardson P."/>
        </authorList>
    </citation>
    <scope>NUCLEOTIDE SEQUENCE [LARGE SCALE GENOMIC DNA]</scope>
    <source>
        <strain>ATCC BAA-2100 / JCM 16839 / KCTC 5957 / BAV1</strain>
    </source>
</reference>
<keyword id="KW-0028">Amino-acid biosynthesis</keyword>
<keyword id="KW-0057">Aromatic amino acid biosynthesis</keyword>
<keyword id="KW-0274">FAD</keyword>
<keyword id="KW-0285">Flavoprotein</keyword>
<keyword id="KW-0288">FMN</keyword>
<keyword id="KW-0456">Lyase</keyword>
<keyword id="KW-0521">NADP</keyword>